<proteinExistence type="inferred from homology"/>
<sequence length="373" mass="40148">MASQNPNLAALSAAGVSVWLDDLSRDRLRSGNLQELIDTKSVVGVTTNPSIFQKALSEGHDYDAQVAELAERGADVDATIRTVTTDDVRNACDVLAPRWEASGGVDGRVSIEVDPRLAHETDKTIQQAVELWKIVDRPNLLIKIPATKAGLPAIAAVLAEGISVNVTLIFSVDRHRGVMDAYLTGMEKAAQAGHDLSKIHSVASFFVSRVDTEIDNRLEQIGSAEALALRGQAGVANARLAYAAYQEVFEGDARYQALKERGARVQRPLWASTGVKNPDYSDTLYVTELVAPHTVNTMPEKTLDAVADHGVVKGDSITGTSGDAQQVFDKLEAIGIDLSDVFDVLESEGVEKFEASWKELLDATQAQLDALAK</sequence>
<organism>
    <name type="scientific">Mycobacterium marinum (strain ATCC BAA-535 / M)</name>
    <dbReference type="NCBI Taxonomy" id="216594"/>
    <lineage>
        <taxon>Bacteria</taxon>
        <taxon>Bacillati</taxon>
        <taxon>Actinomycetota</taxon>
        <taxon>Actinomycetes</taxon>
        <taxon>Mycobacteriales</taxon>
        <taxon>Mycobacteriaceae</taxon>
        <taxon>Mycobacterium</taxon>
        <taxon>Mycobacterium ulcerans group</taxon>
    </lineage>
</organism>
<feature type="chain" id="PRO_1000126268" description="Transaldolase">
    <location>
        <begin position="1"/>
        <end position="373"/>
    </location>
</feature>
<feature type="active site" description="Schiff-base intermediate with substrate" evidence="1">
    <location>
        <position position="143"/>
    </location>
</feature>
<dbReference type="EC" id="2.2.1.2" evidence="1"/>
<dbReference type="EMBL" id="CP000854">
    <property type="protein sequence ID" value="ACC40702.1"/>
    <property type="molecule type" value="Genomic_DNA"/>
</dbReference>
<dbReference type="RefSeq" id="WP_012394009.1">
    <property type="nucleotide sequence ID" value="NC_010612.1"/>
</dbReference>
<dbReference type="SMR" id="B2HP98"/>
<dbReference type="STRING" id="216594.MMAR_2253"/>
<dbReference type="KEGG" id="mmi:MMAR_2253"/>
<dbReference type="eggNOG" id="COG0176">
    <property type="taxonomic scope" value="Bacteria"/>
</dbReference>
<dbReference type="HOGENOM" id="CLU_050771_1_0_11"/>
<dbReference type="OrthoDB" id="9809101at2"/>
<dbReference type="UniPathway" id="UPA00115">
    <property type="reaction ID" value="UER00414"/>
</dbReference>
<dbReference type="Proteomes" id="UP000001190">
    <property type="component" value="Chromosome"/>
</dbReference>
<dbReference type="GO" id="GO:0005737">
    <property type="term" value="C:cytoplasm"/>
    <property type="evidence" value="ECO:0007669"/>
    <property type="project" value="UniProtKB-SubCell"/>
</dbReference>
<dbReference type="GO" id="GO:0004801">
    <property type="term" value="F:transaldolase activity"/>
    <property type="evidence" value="ECO:0007669"/>
    <property type="project" value="UniProtKB-UniRule"/>
</dbReference>
<dbReference type="GO" id="GO:0005975">
    <property type="term" value="P:carbohydrate metabolic process"/>
    <property type="evidence" value="ECO:0007669"/>
    <property type="project" value="InterPro"/>
</dbReference>
<dbReference type="GO" id="GO:0006098">
    <property type="term" value="P:pentose-phosphate shunt"/>
    <property type="evidence" value="ECO:0007669"/>
    <property type="project" value="UniProtKB-UniRule"/>
</dbReference>
<dbReference type="CDD" id="cd00955">
    <property type="entry name" value="Transaldolase_like"/>
    <property type="match status" value="1"/>
</dbReference>
<dbReference type="Gene3D" id="3.20.20.70">
    <property type="entry name" value="Aldolase class I"/>
    <property type="match status" value="1"/>
</dbReference>
<dbReference type="HAMAP" id="MF_00493">
    <property type="entry name" value="Transaldolase_2"/>
    <property type="match status" value="1"/>
</dbReference>
<dbReference type="InterPro" id="IPR013785">
    <property type="entry name" value="Aldolase_TIM"/>
</dbReference>
<dbReference type="InterPro" id="IPR001585">
    <property type="entry name" value="TAL/FSA"/>
</dbReference>
<dbReference type="InterPro" id="IPR004732">
    <property type="entry name" value="Transaldolase_2"/>
</dbReference>
<dbReference type="InterPro" id="IPR018225">
    <property type="entry name" value="Transaldolase_AS"/>
</dbReference>
<dbReference type="NCBIfam" id="NF002881">
    <property type="entry name" value="PRK03343.1"/>
    <property type="match status" value="1"/>
</dbReference>
<dbReference type="NCBIfam" id="TIGR00876">
    <property type="entry name" value="tal_mycobact"/>
    <property type="match status" value="1"/>
</dbReference>
<dbReference type="PANTHER" id="PTHR10683">
    <property type="entry name" value="TRANSALDOLASE"/>
    <property type="match status" value="1"/>
</dbReference>
<dbReference type="PANTHER" id="PTHR10683:SF31">
    <property type="entry name" value="TRANSALDOLASE"/>
    <property type="match status" value="1"/>
</dbReference>
<dbReference type="Pfam" id="PF00923">
    <property type="entry name" value="TAL_FSA"/>
    <property type="match status" value="1"/>
</dbReference>
<dbReference type="PIRSF" id="PIRSF036915">
    <property type="entry name" value="Trnald_Bac_Plnt"/>
    <property type="match status" value="1"/>
</dbReference>
<dbReference type="SUPFAM" id="SSF51569">
    <property type="entry name" value="Aldolase"/>
    <property type="match status" value="1"/>
</dbReference>
<dbReference type="PROSITE" id="PS01054">
    <property type="entry name" value="TRANSALDOLASE_1"/>
    <property type="match status" value="1"/>
</dbReference>
<name>TAL_MYCMM</name>
<accession>B2HP98</accession>
<evidence type="ECO:0000255" key="1">
    <source>
        <dbReference type="HAMAP-Rule" id="MF_00493"/>
    </source>
</evidence>
<comment type="function">
    <text evidence="1">Transaldolase is important for the balance of metabolites in the pentose-phosphate pathway.</text>
</comment>
<comment type="catalytic activity">
    <reaction evidence="1">
        <text>D-sedoheptulose 7-phosphate + D-glyceraldehyde 3-phosphate = D-erythrose 4-phosphate + beta-D-fructose 6-phosphate</text>
        <dbReference type="Rhea" id="RHEA:17053"/>
        <dbReference type="ChEBI" id="CHEBI:16897"/>
        <dbReference type="ChEBI" id="CHEBI:57483"/>
        <dbReference type="ChEBI" id="CHEBI:57634"/>
        <dbReference type="ChEBI" id="CHEBI:59776"/>
        <dbReference type="EC" id="2.2.1.2"/>
    </reaction>
</comment>
<comment type="pathway">
    <text evidence="1">Carbohydrate degradation; pentose phosphate pathway; D-glyceraldehyde 3-phosphate and beta-D-fructose 6-phosphate from D-ribose 5-phosphate and D-xylulose 5-phosphate (non-oxidative stage): step 2/3.</text>
</comment>
<comment type="subcellular location">
    <subcellularLocation>
        <location evidence="1">Cytoplasm</location>
    </subcellularLocation>
</comment>
<comment type="similarity">
    <text evidence="1">Belongs to the transaldolase family. Type 2 subfamily.</text>
</comment>
<gene>
    <name evidence="1" type="primary">tal</name>
    <name type="ordered locus">MMAR_2253</name>
</gene>
<reference key="1">
    <citation type="journal article" date="2008" name="Genome Res.">
        <title>Insights from the complete genome sequence of Mycobacterium marinum on the evolution of Mycobacterium tuberculosis.</title>
        <authorList>
            <person name="Stinear T.P."/>
            <person name="Seemann T."/>
            <person name="Harrison P.F."/>
            <person name="Jenkin G.A."/>
            <person name="Davies J.K."/>
            <person name="Johnson P.D."/>
            <person name="Abdellah Z."/>
            <person name="Arrowsmith C."/>
            <person name="Chillingworth T."/>
            <person name="Churcher C."/>
            <person name="Clarke K."/>
            <person name="Cronin A."/>
            <person name="Davis P."/>
            <person name="Goodhead I."/>
            <person name="Holroyd N."/>
            <person name="Jagels K."/>
            <person name="Lord A."/>
            <person name="Moule S."/>
            <person name="Mungall K."/>
            <person name="Norbertczak H."/>
            <person name="Quail M.A."/>
            <person name="Rabbinowitsch E."/>
            <person name="Walker D."/>
            <person name="White B."/>
            <person name="Whitehead S."/>
            <person name="Small P.L."/>
            <person name="Brosch R."/>
            <person name="Ramakrishnan L."/>
            <person name="Fischbach M.A."/>
            <person name="Parkhill J."/>
            <person name="Cole S.T."/>
        </authorList>
    </citation>
    <scope>NUCLEOTIDE SEQUENCE [LARGE SCALE GENOMIC DNA]</scope>
    <source>
        <strain>ATCC BAA-535 / M</strain>
    </source>
</reference>
<keyword id="KW-0963">Cytoplasm</keyword>
<keyword id="KW-0570">Pentose shunt</keyword>
<keyword id="KW-1185">Reference proteome</keyword>
<keyword id="KW-0704">Schiff base</keyword>
<keyword id="KW-0808">Transferase</keyword>
<protein>
    <recommendedName>
        <fullName evidence="1">Transaldolase</fullName>
        <ecNumber evidence="1">2.2.1.2</ecNumber>
    </recommendedName>
</protein>